<protein>
    <recommendedName>
        <fullName evidence="1">N-succinylarginine dihydrolase</fullName>
        <ecNumber evidence="1">3.5.3.23</ecNumber>
    </recommendedName>
</protein>
<sequence length="447" mass="49299">MNAWEVNFDGLVGLTHHYAGLSFGNEASTRHRFQVSNPRLAAKQGLLKMKTLADAGFPQAVIPPHERPFIPVLRQLGFSGSDEQVLEKVARQAPHWLSSVSSASPMWVANAATIAPSADTLDGKVHLTVANLNNKFHRSLEAPVTESLLKAIFNDEEKFSVHSALPQVALLGDEGAANHNRLGGHYGEPGMQLFVYGREEGNDTRPSRYPARQTREASEAVARLNQVNPQQVIFAQQNPDVIDQGVFHNDVIAVSNRQVLFCHQQAFARQSQLLANLRARVNGFMAIEVPATQVSVSDAVSTYLFNSQLLSRDDGSMMLVLPQECREHAGVWGYLNELLAADNPISELKVFDLRESMANGGGPACLRLRVVLTEEERRAVNPAVMMNDTLFNALNDWVDRYYRDRLTAADLADPQLLREGREALDVLSQLLNLGSVYPFQREGGGNG</sequence>
<reference key="1">
    <citation type="journal article" date="2005" name="Nucleic Acids Res.">
        <title>Genome dynamics and diversity of Shigella species, the etiologic agents of bacillary dysentery.</title>
        <authorList>
            <person name="Yang F."/>
            <person name="Yang J."/>
            <person name="Zhang X."/>
            <person name="Chen L."/>
            <person name="Jiang Y."/>
            <person name="Yan Y."/>
            <person name="Tang X."/>
            <person name="Wang J."/>
            <person name="Xiong Z."/>
            <person name="Dong J."/>
            <person name="Xue Y."/>
            <person name="Zhu Y."/>
            <person name="Xu X."/>
            <person name="Sun L."/>
            <person name="Chen S."/>
            <person name="Nie H."/>
            <person name="Peng J."/>
            <person name="Xu J."/>
            <person name="Wang Y."/>
            <person name="Yuan Z."/>
            <person name="Wen Y."/>
            <person name="Yao Z."/>
            <person name="Shen Y."/>
            <person name="Qiang B."/>
            <person name="Hou Y."/>
            <person name="Yu J."/>
            <person name="Jin Q."/>
        </authorList>
    </citation>
    <scope>NUCLEOTIDE SEQUENCE [LARGE SCALE GENOMIC DNA]</scope>
    <source>
        <strain>Sb227</strain>
    </source>
</reference>
<name>ASTB_SHIBS</name>
<feature type="chain" id="PRO_0000262377" description="N-succinylarginine dihydrolase">
    <location>
        <begin position="1"/>
        <end position="447"/>
    </location>
</feature>
<feature type="active site" evidence="1">
    <location>
        <position position="174"/>
    </location>
</feature>
<feature type="active site" evidence="1">
    <location>
        <position position="248"/>
    </location>
</feature>
<feature type="active site" description="Nucleophile" evidence="1">
    <location>
        <position position="365"/>
    </location>
</feature>
<feature type="binding site" evidence="1">
    <location>
        <begin position="19"/>
        <end position="28"/>
    </location>
    <ligand>
        <name>substrate</name>
    </ligand>
</feature>
<feature type="binding site" evidence="1">
    <location>
        <position position="110"/>
    </location>
    <ligand>
        <name>substrate</name>
    </ligand>
</feature>
<feature type="binding site" evidence="1">
    <location>
        <begin position="137"/>
        <end position="138"/>
    </location>
    <ligand>
        <name>substrate</name>
    </ligand>
</feature>
<feature type="binding site" evidence="1">
    <location>
        <position position="212"/>
    </location>
    <ligand>
        <name>substrate</name>
    </ligand>
</feature>
<feature type="binding site" evidence="1">
    <location>
        <position position="250"/>
    </location>
    <ligand>
        <name>substrate</name>
    </ligand>
</feature>
<feature type="binding site" evidence="1">
    <location>
        <position position="359"/>
    </location>
    <ligand>
        <name>substrate</name>
    </ligand>
</feature>
<organism>
    <name type="scientific">Shigella boydii serotype 4 (strain Sb227)</name>
    <dbReference type="NCBI Taxonomy" id="300268"/>
    <lineage>
        <taxon>Bacteria</taxon>
        <taxon>Pseudomonadati</taxon>
        <taxon>Pseudomonadota</taxon>
        <taxon>Gammaproteobacteria</taxon>
        <taxon>Enterobacterales</taxon>
        <taxon>Enterobacteriaceae</taxon>
        <taxon>Shigella</taxon>
    </lineage>
</organism>
<comment type="function">
    <text evidence="1">Catalyzes the hydrolysis of N(2)-succinylarginine into N(2)-succinylornithine, ammonia and CO(2).</text>
</comment>
<comment type="catalytic activity">
    <reaction evidence="1">
        <text>N(2)-succinyl-L-arginine + 2 H2O + 2 H(+) = N(2)-succinyl-L-ornithine + 2 NH4(+) + CO2</text>
        <dbReference type="Rhea" id="RHEA:19533"/>
        <dbReference type="ChEBI" id="CHEBI:15377"/>
        <dbReference type="ChEBI" id="CHEBI:15378"/>
        <dbReference type="ChEBI" id="CHEBI:16526"/>
        <dbReference type="ChEBI" id="CHEBI:28938"/>
        <dbReference type="ChEBI" id="CHEBI:58241"/>
        <dbReference type="ChEBI" id="CHEBI:58514"/>
        <dbReference type="EC" id="3.5.3.23"/>
    </reaction>
</comment>
<comment type="pathway">
    <text evidence="1">Amino-acid degradation; L-arginine degradation via AST pathway; L-glutamate and succinate from L-arginine: step 2/5.</text>
</comment>
<comment type="subunit">
    <text evidence="1">Homodimer.</text>
</comment>
<comment type="similarity">
    <text evidence="1">Belongs to the succinylarginine dihydrolase family.</text>
</comment>
<dbReference type="EC" id="3.5.3.23" evidence="1"/>
<dbReference type="EMBL" id="CP000036">
    <property type="protein sequence ID" value="ABB65971.1"/>
    <property type="molecule type" value="Genomic_DNA"/>
</dbReference>
<dbReference type="RefSeq" id="WP_000994988.1">
    <property type="nucleotide sequence ID" value="NC_007613.1"/>
</dbReference>
<dbReference type="SMR" id="Q321N7"/>
<dbReference type="GeneID" id="93775959"/>
<dbReference type="KEGG" id="sbo:SBO_1345"/>
<dbReference type="HOGENOM" id="CLU_053835_0_0_6"/>
<dbReference type="UniPathway" id="UPA00185">
    <property type="reaction ID" value="UER00280"/>
</dbReference>
<dbReference type="Proteomes" id="UP000007067">
    <property type="component" value="Chromosome"/>
</dbReference>
<dbReference type="GO" id="GO:0009015">
    <property type="term" value="F:N-succinylarginine dihydrolase activity"/>
    <property type="evidence" value="ECO:0007669"/>
    <property type="project" value="UniProtKB-UniRule"/>
</dbReference>
<dbReference type="GO" id="GO:0019544">
    <property type="term" value="P:arginine catabolic process to glutamate"/>
    <property type="evidence" value="ECO:0007669"/>
    <property type="project" value="UniProtKB-UniRule"/>
</dbReference>
<dbReference type="GO" id="GO:0019545">
    <property type="term" value="P:arginine catabolic process to succinate"/>
    <property type="evidence" value="ECO:0007669"/>
    <property type="project" value="UniProtKB-UniRule"/>
</dbReference>
<dbReference type="FunFam" id="3.75.10.20:FF:000001">
    <property type="entry name" value="N-succinylarginine dihydrolase"/>
    <property type="match status" value="1"/>
</dbReference>
<dbReference type="Gene3D" id="3.75.10.20">
    <property type="entry name" value="Succinylarginine dihydrolase"/>
    <property type="match status" value="1"/>
</dbReference>
<dbReference type="HAMAP" id="MF_01172">
    <property type="entry name" value="AstB"/>
    <property type="match status" value="1"/>
</dbReference>
<dbReference type="InterPro" id="IPR037031">
    <property type="entry name" value="AstB_sf"/>
</dbReference>
<dbReference type="InterPro" id="IPR007079">
    <property type="entry name" value="SuccinylArg_d-Hdrlase_AstB"/>
</dbReference>
<dbReference type="NCBIfam" id="TIGR03241">
    <property type="entry name" value="arg_catab_astB"/>
    <property type="match status" value="1"/>
</dbReference>
<dbReference type="NCBIfam" id="NF009789">
    <property type="entry name" value="PRK13281.1"/>
    <property type="match status" value="1"/>
</dbReference>
<dbReference type="PANTHER" id="PTHR30420">
    <property type="entry name" value="N-SUCCINYLARGININE DIHYDROLASE"/>
    <property type="match status" value="1"/>
</dbReference>
<dbReference type="PANTHER" id="PTHR30420:SF2">
    <property type="entry name" value="N-SUCCINYLARGININE DIHYDROLASE"/>
    <property type="match status" value="1"/>
</dbReference>
<dbReference type="Pfam" id="PF04996">
    <property type="entry name" value="AstB"/>
    <property type="match status" value="1"/>
</dbReference>
<dbReference type="SUPFAM" id="SSF55909">
    <property type="entry name" value="Pentein"/>
    <property type="match status" value="1"/>
</dbReference>
<evidence type="ECO:0000255" key="1">
    <source>
        <dbReference type="HAMAP-Rule" id="MF_01172"/>
    </source>
</evidence>
<accession>Q321N7</accession>
<gene>
    <name evidence="1" type="primary">astB</name>
    <name type="ordered locus">SBO_1345</name>
</gene>
<keyword id="KW-0056">Arginine metabolism</keyword>
<keyword id="KW-0378">Hydrolase</keyword>
<proteinExistence type="inferred from homology"/>